<name>NU5C_ZYGCR</name>
<evidence type="ECO:0000250" key="1"/>
<evidence type="ECO:0000255" key="2"/>
<evidence type="ECO:0000305" key="3"/>
<proteinExistence type="inferred from homology"/>
<organism>
    <name type="scientific">Zygnema circumcarinatum</name>
    <name type="common">Green alga</name>
    <dbReference type="NCBI Taxonomy" id="35869"/>
    <lineage>
        <taxon>Eukaryota</taxon>
        <taxon>Viridiplantae</taxon>
        <taxon>Streptophyta</taxon>
        <taxon>Zygnematophyceae</taxon>
        <taxon>Zygnematophycidae</taxon>
        <taxon>Zygnematales</taxon>
        <taxon>Zygnemataceae</taxon>
        <taxon>Zygnema</taxon>
    </lineage>
</organism>
<comment type="function">
    <text evidence="1">NDH shuttles electrons from NAD(P)H:plastoquinone, via FMN and iron-sulfur (Fe-S) centers, to quinones in the photosynthetic chain and possibly in a chloroplast respiratory chain. The immediate electron acceptor for the enzyme in this species is believed to be plastoquinone. Couples the redox reaction to proton translocation, and thus conserves the redox energy in a proton gradient (By similarity).</text>
</comment>
<comment type="catalytic activity">
    <reaction>
        <text>a plastoquinone + NADH + (n+1) H(+)(in) = a plastoquinol + NAD(+) + n H(+)(out)</text>
        <dbReference type="Rhea" id="RHEA:42608"/>
        <dbReference type="Rhea" id="RHEA-COMP:9561"/>
        <dbReference type="Rhea" id="RHEA-COMP:9562"/>
        <dbReference type="ChEBI" id="CHEBI:15378"/>
        <dbReference type="ChEBI" id="CHEBI:17757"/>
        <dbReference type="ChEBI" id="CHEBI:57540"/>
        <dbReference type="ChEBI" id="CHEBI:57945"/>
        <dbReference type="ChEBI" id="CHEBI:62192"/>
    </reaction>
</comment>
<comment type="catalytic activity">
    <reaction>
        <text>a plastoquinone + NADPH + (n+1) H(+)(in) = a plastoquinol + NADP(+) + n H(+)(out)</text>
        <dbReference type="Rhea" id="RHEA:42612"/>
        <dbReference type="Rhea" id="RHEA-COMP:9561"/>
        <dbReference type="Rhea" id="RHEA-COMP:9562"/>
        <dbReference type="ChEBI" id="CHEBI:15378"/>
        <dbReference type="ChEBI" id="CHEBI:17757"/>
        <dbReference type="ChEBI" id="CHEBI:57783"/>
        <dbReference type="ChEBI" id="CHEBI:58349"/>
        <dbReference type="ChEBI" id="CHEBI:62192"/>
    </reaction>
</comment>
<comment type="subunit">
    <text evidence="1">NDH is composed of at least 16 different subunits, 5 of which are encoded in the nucleus.</text>
</comment>
<comment type="subcellular location">
    <subcellularLocation>
        <location evidence="1">Plastid</location>
        <location evidence="1">Chloroplast thylakoid membrane</location>
        <topology evidence="1">Multi-pass membrane protein</topology>
    </subcellularLocation>
</comment>
<comment type="similarity">
    <text evidence="3">Belongs to the complex I subunit 5 family.</text>
</comment>
<accession>Q32RH9</accession>
<geneLocation type="chloroplast"/>
<feature type="chain" id="PRO_0000360975" description="NAD(P)H-quinone oxidoreductase subunit 5, chloroplastic">
    <location>
        <begin position="1"/>
        <end position="702"/>
    </location>
</feature>
<feature type="transmembrane region" description="Helical" evidence="2">
    <location>
        <begin position="7"/>
        <end position="27"/>
    </location>
</feature>
<feature type="transmembrane region" description="Helical" evidence="2">
    <location>
        <begin position="40"/>
        <end position="60"/>
    </location>
</feature>
<feature type="transmembrane region" description="Helical" evidence="2">
    <location>
        <begin position="91"/>
        <end position="111"/>
    </location>
</feature>
<feature type="transmembrane region" description="Helical" evidence="2">
    <location>
        <begin position="124"/>
        <end position="144"/>
    </location>
</feature>
<feature type="transmembrane region" description="Helical" evidence="2">
    <location>
        <begin position="147"/>
        <end position="167"/>
    </location>
</feature>
<feature type="transmembrane region" description="Helical" evidence="2">
    <location>
        <begin position="189"/>
        <end position="209"/>
    </location>
</feature>
<feature type="transmembrane region" description="Helical" evidence="2">
    <location>
        <begin position="224"/>
        <end position="244"/>
    </location>
</feature>
<feature type="transmembrane region" description="Helical" evidence="2">
    <location>
        <begin position="258"/>
        <end position="278"/>
    </location>
</feature>
<feature type="transmembrane region" description="Helical" evidence="2">
    <location>
        <begin position="289"/>
        <end position="309"/>
    </location>
</feature>
<feature type="transmembrane region" description="Helical" evidence="2">
    <location>
        <begin position="327"/>
        <end position="347"/>
    </location>
</feature>
<feature type="transmembrane region" description="Helical" evidence="2">
    <location>
        <begin position="354"/>
        <end position="374"/>
    </location>
</feature>
<feature type="transmembrane region" description="Helical" evidence="2">
    <location>
        <begin position="395"/>
        <end position="415"/>
    </location>
</feature>
<feature type="transmembrane region" description="Helical" evidence="2">
    <location>
        <begin position="427"/>
        <end position="447"/>
    </location>
</feature>
<feature type="transmembrane region" description="Helical" evidence="2">
    <location>
        <begin position="511"/>
        <end position="531"/>
    </location>
</feature>
<feature type="transmembrane region" description="Helical" evidence="2">
    <location>
        <begin position="562"/>
        <end position="582"/>
    </location>
</feature>
<feature type="transmembrane region" description="Helical" evidence="2">
    <location>
        <begin position="680"/>
        <end position="700"/>
    </location>
</feature>
<protein>
    <recommendedName>
        <fullName>NAD(P)H-quinone oxidoreductase subunit 5, chloroplastic</fullName>
        <ecNumber>7.1.1.-</ecNumber>
    </recommendedName>
    <alternativeName>
        <fullName>NAD(P)H dehydrogenase subunit 5</fullName>
    </alternativeName>
    <alternativeName>
        <fullName>NADH-plastoquinone oxidoreductase subunit 5</fullName>
    </alternativeName>
</protein>
<dbReference type="EC" id="7.1.1.-"/>
<dbReference type="EMBL" id="AY958086">
    <property type="protein sequence ID" value="AAX45817.1"/>
    <property type="molecule type" value="Genomic_DNA"/>
</dbReference>
<dbReference type="RefSeq" id="YP_636547.1">
    <property type="nucleotide sequence ID" value="NC_008117.1"/>
</dbReference>
<dbReference type="SMR" id="Q32RH9"/>
<dbReference type="GeneID" id="4108137"/>
<dbReference type="GO" id="GO:0009535">
    <property type="term" value="C:chloroplast thylakoid membrane"/>
    <property type="evidence" value="ECO:0007669"/>
    <property type="project" value="UniProtKB-SubCell"/>
</dbReference>
<dbReference type="GO" id="GO:0008137">
    <property type="term" value="F:NADH dehydrogenase (ubiquinone) activity"/>
    <property type="evidence" value="ECO:0007669"/>
    <property type="project" value="InterPro"/>
</dbReference>
<dbReference type="GO" id="GO:0048038">
    <property type="term" value="F:quinone binding"/>
    <property type="evidence" value="ECO:0007669"/>
    <property type="project" value="UniProtKB-KW"/>
</dbReference>
<dbReference type="GO" id="GO:0042773">
    <property type="term" value="P:ATP synthesis coupled electron transport"/>
    <property type="evidence" value="ECO:0007669"/>
    <property type="project" value="InterPro"/>
</dbReference>
<dbReference type="GO" id="GO:0015990">
    <property type="term" value="P:electron transport coupled proton transport"/>
    <property type="evidence" value="ECO:0007669"/>
    <property type="project" value="TreeGrafter"/>
</dbReference>
<dbReference type="Gene3D" id="1.20.5.2700">
    <property type="match status" value="1"/>
</dbReference>
<dbReference type="InterPro" id="IPR002128">
    <property type="entry name" value="NADH_UbQ_OxRdtase_chlpt_su5_C"/>
</dbReference>
<dbReference type="InterPro" id="IPR018393">
    <property type="entry name" value="NADHpl_OxRdtase_5_subgr"/>
</dbReference>
<dbReference type="InterPro" id="IPR001750">
    <property type="entry name" value="ND/Mrp_TM"/>
</dbReference>
<dbReference type="InterPro" id="IPR003945">
    <property type="entry name" value="NU5C-like"/>
</dbReference>
<dbReference type="InterPro" id="IPR001516">
    <property type="entry name" value="Proton_antipo_N"/>
</dbReference>
<dbReference type="NCBIfam" id="TIGR01974">
    <property type="entry name" value="NDH_I_L"/>
    <property type="match status" value="1"/>
</dbReference>
<dbReference type="NCBIfam" id="NF005141">
    <property type="entry name" value="PRK06590.1"/>
    <property type="match status" value="1"/>
</dbReference>
<dbReference type="PANTHER" id="PTHR42829">
    <property type="entry name" value="NADH-UBIQUINONE OXIDOREDUCTASE CHAIN 5"/>
    <property type="match status" value="1"/>
</dbReference>
<dbReference type="PANTHER" id="PTHR42829:SF2">
    <property type="entry name" value="NADH-UBIQUINONE OXIDOREDUCTASE CHAIN 5"/>
    <property type="match status" value="1"/>
</dbReference>
<dbReference type="Pfam" id="PF01010">
    <property type="entry name" value="Proton_antipo_C"/>
    <property type="match status" value="1"/>
</dbReference>
<dbReference type="Pfam" id="PF00361">
    <property type="entry name" value="Proton_antipo_M"/>
    <property type="match status" value="1"/>
</dbReference>
<dbReference type="Pfam" id="PF00662">
    <property type="entry name" value="Proton_antipo_N"/>
    <property type="match status" value="1"/>
</dbReference>
<dbReference type="PRINTS" id="PR01434">
    <property type="entry name" value="NADHDHGNASE5"/>
</dbReference>
<dbReference type="PRINTS" id="PR01435">
    <property type="entry name" value="NPOXDRDTASE5"/>
</dbReference>
<reference key="1">
    <citation type="journal article" date="2005" name="BMC Biol.">
        <title>The complete chloroplast DNA sequences of the charophycean green algae Staurastrum and Zygnema reveal that the chloroplast genome underwent extensive changes during the evolution of the Zygnematales.</title>
        <authorList>
            <person name="Turmel M."/>
            <person name="Otis C."/>
            <person name="Lemieux C."/>
        </authorList>
    </citation>
    <scope>NUCLEOTIDE SEQUENCE [LARGE SCALE GENOMIC DNA]</scope>
</reference>
<sequence>MQSINQYVWIIPLLPCLTAVILGLGLISTKNATKSQRLGSAILSIGALLVTMLLSITVLWEQVISDSAYRQLVSWIKVDNLFLEIGCLVDPLSAIMLVLVTTVGVLVMIYTHGYMSHDQGYVRFFAYLSLFTASMLGLVLSPNLVQVYAFWELVGMCSYLLVGFWFTRPSAAYACQKAFITNRVGDFGLLLGILALYWLTGSLEFDIVASRAHQLLVENSANTVLLTVCCVLLFLGPIAKSAQFPLHVWLPDAMEGPTPISALIHAATMVAAGVYLVARLLPLFQEVPLVMDIVAWTGGITAVLGATVALAQKDLKKGLAYSTMSQLGYMILALGVGSYQAGLFHLITHAYSKALLFLGSGSVIHGIEPVVGYNPNQSQNMTYMGGLRSYMPITGVTFLIGTLSLCGVPPFACFWSKDEILADAWHKLPVLGLLAWLTAGLTAFYMFRMYFITFEGTFRGSSLISNKSSKQTLSVNKMDSVFALSNQTKDNTSLKASKHLDPHESSNAMTIPLIVLTIPTILIGFIGAPLPNGLTGSSLLSHWLYLDNTEIVELSTNGWTEFAITALPSVSIGILGAFIAWIVYGPHVDRLKNNPVSIDPSAEGWTGILLNSIYNWSLRRAYIDEIYDQTFVWATRSSANALAWFDQWTIDGIVNVGGLFTLLGGEGTRYTESGRTSAYIFVLGIGLVFVMIAAVLFNFFHL</sequence>
<keyword id="KW-0150">Chloroplast</keyword>
<keyword id="KW-0472">Membrane</keyword>
<keyword id="KW-0520">NAD</keyword>
<keyword id="KW-0521">NADP</keyword>
<keyword id="KW-0934">Plastid</keyword>
<keyword id="KW-0618">Plastoquinone</keyword>
<keyword id="KW-0874">Quinone</keyword>
<keyword id="KW-0793">Thylakoid</keyword>
<keyword id="KW-1278">Translocase</keyword>
<keyword id="KW-0812">Transmembrane</keyword>
<keyword id="KW-1133">Transmembrane helix</keyword>
<keyword id="KW-0813">Transport</keyword>
<gene>
    <name type="primary">ndhF</name>
</gene>